<organism>
    <name type="scientific">Drosophila mojavensis</name>
    <name type="common">Fruit fly</name>
    <dbReference type="NCBI Taxonomy" id="7230"/>
    <lineage>
        <taxon>Eukaryota</taxon>
        <taxon>Metazoa</taxon>
        <taxon>Ecdysozoa</taxon>
        <taxon>Arthropoda</taxon>
        <taxon>Hexapoda</taxon>
        <taxon>Insecta</taxon>
        <taxon>Pterygota</taxon>
        <taxon>Neoptera</taxon>
        <taxon>Endopterygota</taxon>
        <taxon>Diptera</taxon>
        <taxon>Brachycera</taxon>
        <taxon>Muscomorpha</taxon>
        <taxon>Ephydroidea</taxon>
        <taxon>Drosophilidae</taxon>
        <taxon>Drosophila</taxon>
    </lineage>
</organism>
<reference key="1">
    <citation type="journal article" date="2007" name="Nature">
        <title>Evolution of genes and genomes on the Drosophila phylogeny.</title>
        <authorList>
            <consortium name="Drosophila 12 genomes consortium"/>
        </authorList>
    </citation>
    <scope>NUCLEOTIDE SEQUENCE [LARGE SCALE GENOMIC DNA]</scope>
    <source>
        <strain>Tucson 15081-1352.22</strain>
    </source>
</reference>
<comment type="function">
    <text evidence="1 2">Protein that can both mediate the addition of adenosine 5'-monophosphate (AMP) to specific residues of target proteins (AMPylation), and the removal of the same modification from target proteins (de-AMPylation), depending on the context (By similarity). The side chain of Glu-251 determines which of the two opposing activities (AMPylase or de-AMPylase) will take place (By similarity). Acts as a key regulator of the unfolded protein response (UPR) by mediating AMPylation or de-AMPylation of Hsc70-3/BiP. In unstressed cells, acts as an adenylyltransferase by mediating AMPylation of Hsc70-3/BiP at 'Thr-518', thereby inactivating it. In response to endoplasmic reticulum stress, acts as a phosphodiesterase by mediating removal of ATP (de-AMPylation) from Hsc70-3/BiP at 'Thr-518', leading to restore HSPA5/BiP activity (By similarity).</text>
</comment>
<comment type="catalytic activity">
    <reaction evidence="3">
        <text>L-tyrosyl-[protein] + ATP = O-(5'-adenylyl)-L-tyrosyl-[protein] + diphosphate</text>
        <dbReference type="Rhea" id="RHEA:54288"/>
        <dbReference type="Rhea" id="RHEA-COMP:10136"/>
        <dbReference type="Rhea" id="RHEA-COMP:13846"/>
        <dbReference type="ChEBI" id="CHEBI:30616"/>
        <dbReference type="ChEBI" id="CHEBI:33019"/>
        <dbReference type="ChEBI" id="CHEBI:46858"/>
        <dbReference type="ChEBI" id="CHEBI:83624"/>
        <dbReference type="EC" id="2.7.7.108"/>
    </reaction>
</comment>
<comment type="catalytic activity">
    <reaction evidence="2">
        <text>L-threonyl-[protein] + ATP = 3-O-(5'-adenylyl)-L-threonyl-[protein] + diphosphate</text>
        <dbReference type="Rhea" id="RHEA:54292"/>
        <dbReference type="Rhea" id="RHEA-COMP:11060"/>
        <dbReference type="Rhea" id="RHEA-COMP:13847"/>
        <dbReference type="ChEBI" id="CHEBI:30013"/>
        <dbReference type="ChEBI" id="CHEBI:30616"/>
        <dbReference type="ChEBI" id="CHEBI:33019"/>
        <dbReference type="ChEBI" id="CHEBI:138113"/>
        <dbReference type="EC" id="2.7.7.108"/>
    </reaction>
</comment>
<comment type="catalytic activity">
    <reaction evidence="2">
        <text>3-O-(5'-adenylyl)-L-threonyl-[protein] + H2O = L-threonyl-[protein] + AMP + H(+)</text>
        <dbReference type="Rhea" id="RHEA:55932"/>
        <dbReference type="Rhea" id="RHEA-COMP:11060"/>
        <dbReference type="Rhea" id="RHEA-COMP:13847"/>
        <dbReference type="ChEBI" id="CHEBI:15377"/>
        <dbReference type="ChEBI" id="CHEBI:15378"/>
        <dbReference type="ChEBI" id="CHEBI:30013"/>
        <dbReference type="ChEBI" id="CHEBI:138113"/>
        <dbReference type="ChEBI" id="CHEBI:456215"/>
    </reaction>
</comment>
<comment type="activity regulation">
    <text evidence="1 3">The side chain of Glu-251 determines which of the two opposing activities (AMPylase or de-AMPylase) will take place. In response to endoplasmic reticulum stress, mediates de-AMPylase activity (By similarity). Adenylyltransferase activity is inhibited by the inhibitory helix present at the N-terminus: Glu-251 binds ATP and competes with ATP-binding at Arg-390, thereby preventing adenylyltransferase activity (By similarity). In unstressed cells, disengagement of Glu-251 promotes adenylyltransferase activity (By similarity). Activation dissociates ATP-binding from Glu-251, allowing ordered binding of the entire ATP moiety with the alpha-phosphate in an orientation that is productive for accepting an incoming target hydroxyl side chain (By similarity).</text>
</comment>
<comment type="subunit">
    <text evidence="2">Homodimer.</text>
</comment>
<comment type="subcellular location">
    <subcellularLocation>
        <location evidence="2">Membrane</location>
        <topology evidence="2">Single-pass membrane protein</topology>
    </subcellularLocation>
</comment>
<comment type="domain">
    <text evidence="3">The fido domain mediates the adenylyltransferase activity.</text>
</comment>
<comment type="similarity">
    <text evidence="7">Belongs to the fic family.</text>
</comment>
<evidence type="ECO:0000250" key="1">
    <source>
        <dbReference type="UniProtKB" id="A0A061I403"/>
    </source>
</evidence>
<evidence type="ECO:0000250" key="2">
    <source>
        <dbReference type="UniProtKB" id="Q8SWV6"/>
    </source>
</evidence>
<evidence type="ECO:0000250" key="3">
    <source>
        <dbReference type="UniProtKB" id="Q9BVA6"/>
    </source>
</evidence>
<evidence type="ECO:0000255" key="4"/>
<evidence type="ECO:0000255" key="5">
    <source>
        <dbReference type="PROSITE-ProRule" id="PRU00791"/>
    </source>
</evidence>
<evidence type="ECO:0000256" key="6">
    <source>
        <dbReference type="SAM" id="MobiDB-lite"/>
    </source>
</evidence>
<evidence type="ECO:0000305" key="7"/>
<protein>
    <recommendedName>
        <fullName>Protein adenylyltransferase Fic</fullName>
        <ecNumber evidence="2">2.7.7.108</ecNumber>
    </recommendedName>
    <alternativeName>
        <fullName evidence="7">De-AMPylase Fic</fullName>
        <ecNumber evidence="1 2">3.1.4.-</ecNumber>
    </alternativeName>
</protein>
<dbReference type="EC" id="2.7.7.108" evidence="2"/>
<dbReference type="EC" id="3.1.4.-" evidence="1 2"/>
<dbReference type="EMBL" id="CH933807">
    <property type="protein sequence ID" value="EDW12092.1"/>
    <property type="molecule type" value="Genomic_DNA"/>
</dbReference>
<dbReference type="SMR" id="B4KFW6"/>
<dbReference type="FunCoup" id="B4KFW6">
    <property type="interactions" value="259"/>
</dbReference>
<dbReference type="EnsemblMetazoa" id="FBtr0162320">
    <property type="protein sequence ID" value="FBpp0160812"/>
    <property type="gene ID" value="FBgn0134355"/>
</dbReference>
<dbReference type="EnsemblMetazoa" id="XM_002002614.4">
    <property type="protein sequence ID" value="XP_002002650.1"/>
    <property type="gene ID" value="LOC6576662"/>
</dbReference>
<dbReference type="GeneID" id="6576662"/>
<dbReference type="KEGG" id="dmo:Dmoj_GI11595"/>
<dbReference type="CTD" id="33897"/>
<dbReference type="eggNOG" id="KOG3824">
    <property type="taxonomic scope" value="Eukaryota"/>
</dbReference>
<dbReference type="HOGENOM" id="CLU_040460_0_0_1"/>
<dbReference type="InParanoid" id="B4KFW6"/>
<dbReference type="OMA" id="QLRCQLW"/>
<dbReference type="OrthoDB" id="439046at2759"/>
<dbReference type="PhylomeDB" id="B4KFW6"/>
<dbReference type="Proteomes" id="UP000009192">
    <property type="component" value="Unassembled WGS sequence"/>
</dbReference>
<dbReference type="GO" id="GO:0005886">
    <property type="term" value="C:plasma membrane"/>
    <property type="evidence" value="ECO:0007669"/>
    <property type="project" value="EnsemblMetazoa"/>
</dbReference>
<dbReference type="GO" id="GO:0070733">
    <property type="term" value="F:AMPylase activity"/>
    <property type="evidence" value="ECO:0000250"/>
    <property type="project" value="UniProtKB"/>
</dbReference>
<dbReference type="GO" id="GO:0005524">
    <property type="term" value="F:ATP binding"/>
    <property type="evidence" value="ECO:0007669"/>
    <property type="project" value="UniProtKB-KW"/>
</dbReference>
<dbReference type="GO" id="GO:0030544">
    <property type="term" value="F:Hsp70 protein binding"/>
    <property type="evidence" value="ECO:0007669"/>
    <property type="project" value="EnsemblMetazoa"/>
</dbReference>
<dbReference type="GO" id="GO:0044603">
    <property type="term" value="F:protein adenylylhydrolase activity"/>
    <property type="evidence" value="ECO:0007669"/>
    <property type="project" value="EnsemblMetazoa"/>
</dbReference>
<dbReference type="GO" id="GO:0042803">
    <property type="term" value="F:protein homodimerization activity"/>
    <property type="evidence" value="ECO:0007669"/>
    <property type="project" value="EnsemblMetazoa"/>
</dbReference>
<dbReference type="GO" id="GO:0050908">
    <property type="term" value="P:detection of light stimulus involved in visual perception"/>
    <property type="evidence" value="ECO:0007669"/>
    <property type="project" value="EnsemblMetazoa"/>
</dbReference>
<dbReference type="GO" id="GO:0051608">
    <property type="term" value="P:histamine transport"/>
    <property type="evidence" value="ECO:0007669"/>
    <property type="project" value="EnsemblMetazoa"/>
</dbReference>
<dbReference type="GO" id="GO:0018117">
    <property type="term" value="P:protein adenylylation"/>
    <property type="evidence" value="ECO:0000250"/>
    <property type="project" value="UniProtKB"/>
</dbReference>
<dbReference type="GO" id="GO:0034976">
    <property type="term" value="P:response to endoplasmic reticulum stress"/>
    <property type="evidence" value="ECO:0007669"/>
    <property type="project" value="EnsemblMetazoa"/>
</dbReference>
<dbReference type="GO" id="GO:0007632">
    <property type="term" value="P:visual behavior"/>
    <property type="evidence" value="ECO:0007669"/>
    <property type="project" value="EnsemblMetazoa"/>
</dbReference>
<dbReference type="FunFam" id="1.10.3290.10:FF:000001">
    <property type="entry name" value="adenosine monophosphate-protein transferase FICD"/>
    <property type="match status" value="1"/>
</dbReference>
<dbReference type="FunFam" id="1.25.40.10:FF:000522">
    <property type="entry name" value="Protein adenylyltransferase Fic"/>
    <property type="match status" value="1"/>
</dbReference>
<dbReference type="Gene3D" id="1.10.3290.10">
    <property type="entry name" value="Fido-like domain"/>
    <property type="match status" value="1"/>
</dbReference>
<dbReference type="Gene3D" id="1.25.40.10">
    <property type="entry name" value="Tetratricopeptide repeat domain"/>
    <property type="match status" value="1"/>
</dbReference>
<dbReference type="InterPro" id="IPR003812">
    <property type="entry name" value="Fido"/>
</dbReference>
<dbReference type="InterPro" id="IPR036597">
    <property type="entry name" value="Fido-like_dom_sf"/>
</dbReference>
<dbReference type="InterPro" id="IPR040198">
    <property type="entry name" value="Fido_containing"/>
</dbReference>
<dbReference type="InterPro" id="IPR011990">
    <property type="entry name" value="TPR-like_helical_dom_sf"/>
</dbReference>
<dbReference type="InterPro" id="IPR019734">
    <property type="entry name" value="TPR_rpt"/>
</dbReference>
<dbReference type="PANTHER" id="PTHR13504">
    <property type="entry name" value="FIDO DOMAIN-CONTAINING PROTEIN DDB_G0283145"/>
    <property type="match status" value="1"/>
</dbReference>
<dbReference type="PANTHER" id="PTHR13504:SF34">
    <property type="entry name" value="PROTEIN ADENYLYLTRANSFERASE FICD"/>
    <property type="match status" value="1"/>
</dbReference>
<dbReference type="Pfam" id="PF02661">
    <property type="entry name" value="Fic"/>
    <property type="match status" value="1"/>
</dbReference>
<dbReference type="Pfam" id="PF13428">
    <property type="entry name" value="TPR_14"/>
    <property type="match status" value="1"/>
</dbReference>
<dbReference type="SUPFAM" id="SSF140931">
    <property type="entry name" value="Fic-like"/>
    <property type="match status" value="1"/>
</dbReference>
<dbReference type="SUPFAM" id="SSF48452">
    <property type="entry name" value="TPR-like"/>
    <property type="match status" value="1"/>
</dbReference>
<dbReference type="PROSITE" id="PS51459">
    <property type="entry name" value="FIDO"/>
    <property type="match status" value="1"/>
</dbReference>
<dbReference type="PROSITE" id="PS50005">
    <property type="entry name" value="TPR"/>
    <property type="match status" value="1"/>
</dbReference>
<dbReference type="PROSITE" id="PS50293">
    <property type="entry name" value="TPR_REGION"/>
    <property type="match status" value="1"/>
</dbReference>
<gene>
    <name type="ORF">GI11595</name>
</gene>
<keyword id="KW-0067">ATP-binding</keyword>
<keyword id="KW-0378">Hydrolase</keyword>
<keyword id="KW-0472">Membrane</keyword>
<keyword id="KW-0547">Nucleotide-binding</keyword>
<keyword id="KW-0548">Nucleotidyltransferase</keyword>
<keyword id="KW-1185">Reference proteome</keyword>
<keyword id="KW-0677">Repeat</keyword>
<keyword id="KW-0802">TPR repeat</keyword>
<keyword id="KW-0808">Transferase</keyword>
<keyword id="KW-0812">Transmembrane</keyword>
<keyword id="KW-1133">Transmembrane helix</keyword>
<sequence length="502" mass="56299">MAMATGKATEEEQPEQGQQQQQLQQQQKQTTLQSTYRFALFFIAGCLAAFGFHALTSSSGSLLGWRLRLHHLPTAHYLQTRDEFAVYSVDELNAFKEFYDKSVSDSVGASLSEAEETNIKEAMGALRLAQEMYMTGKDDKAARLFEHALALAPKHPEVLLRYGEFLEHNQRNIVLADQYYFQALSINPSNTEALANRQRTADVVQLLDERRLSSLDEKRDALSAIHEANSALRRAKKEAYFQHIYHSVGIEGNTMTLAQTRSVLETRMAVDGKSIDEHNEILGMDLAMKYINASLVQKLYITLKDILELHRRVLGHVDPIEGGEFRRNQVYVGGHIPPGPGDLAILMQRFEHWLNSEQSNSLHPVNYAALAHYKLVHIHPFVDGNGRTSRLLMNTLLMRAGYPPVIIPKQQRSQYYHFLKLANEGDIRPFVRFIADCTEKTLDLYLWATSDLPQQIPMLIQTESDGNVLAQLQSHTSSPELYESGSGSGAGAGAGSGQKGMP</sequence>
<feature type="chain" id="PRO_0000381786" description="Protein adenylyltransferase Fic">
    <location>
        <begin position="1"/>
        <end position="502"/>
    </location>
</feature>
<feature type="transmembrane region" description="Helical" evidence="4">
    <location>
        <begin position="38"/>
        <end position="60"/>
    </location>
</feature>
<feature type="repeat" description="TPR 1">
    <location>
        <begin position="122"/>
        <end position="155"/>
    </location>
</feature>
<feature type="repeat" description="TPR 2">
    <location>
        <begin position="156"/>
        <end position="190"/>
    </location>
</feature>
<feature type="domain" description="Fido" evidence="5">
    <location>
        <begin position="301"/>
        <end position="436"/>
    </location>
</feature>
<feature type="region of interest" description="Disordered" evidence="6">
    <location>
        <begin position="1"/>
        <end position="24"/>
    </location>
</feature>
<feature type="region of interest" description="Disordered" evidence="6">
    <location>
        <begin position="478"/>
        <end position="502"/>
    </location>
</feature>
<feature type="short sequence motif" description="Inhibitory (S/T)XXXE(G/N) motif">
    <location>
        <begin position="247"/>
        <end position="252"/>
    </location>
</feature>
<feature type="compositionally biased region" description="Low complexity" evidence="6">
    <location>
        <begin position="15"/>
        <end position="24"/>
    </location>
</feature>
<feature type="compositionally biased region" description="Gly residues" evidence="6">
    <location>
        <begin position="486"/>
        <end position="502"/>
    </location>
</feature>
<feature type="active site" evidence="1">
    <location>
        <position position="379"/>
    </location>
</feature>
<feature type="binding site" evidence="3">
    <location>
        <position position="251"/>
    </location>
    <ligand>
        <name>ATP</name>
        <dbReference type="ChEBI" id="CHEBI:30616"/>
    </ligand>
</feature>
<feature type="binding site" evidence="3">
    <location>
        <begin position="332"/>
        <end position="335"/>
    </location>
    <ligand>
        <name>ATP</name>
        <dbReference type="ChEBI" id="CHEBI:30616"/>
    </ligand>
</feature>
<feature type="binding site" evidence="3">
    <location>
        <begin position="383"/>
        <end position="390"/>
    </location>
    <ligand>
        <name>ATP</name>
        <dbReference type="ChEBI" id="CHEBI:30616"/>
    </ligand>
</feature>
<feature type="binding site" evidence="3">
    <location>
        <begin position="415"/>
        <end position="416"/>
    </location>
    <ligand>
        <name>ATP</name>
        <dbReference type="ChEBI" id="CHEBI:30616"/>
    </ligand>
</feature>
<feature type="binding site" evidence="3">
    <location>
        <position position="423"/>
    </location>
    <ligand>
        <name>ATP</name>
        <dbReference type="ChEBI" id="CHEBI:30616"/>
    </ligand>
</feature>
<feature type="site" description="Important for autoinhibition of adenylyltransferase activity" evidence="3">
    <location>
        <position position="251"/>
    </location>
</feature>
<proteinExistence type="inferred from homology"/>
<accession>B4KFW6</accession>
<name>FICD_DROMO</name>